<accession>A6QGW6</accession>
<evidence type="ECO:0000255" key="1">
    <source>
        <dbReference type="HAMAP-Rule" id="MF_01169"/>
    </source>
</evidence>
<dbReference type="EC" id="1.2.4.2" evidence="1"/>
<dbReference type="EMBL" id="AP009351">
    <property type="protein sequence ID" value="BAF67598.1"/>
    <property type="molecule type" value="Genomic_DNA"/>
</dbReference>
<dbReference type="RefSeq" id="WP_000180666.1">
    <property type="nucleotide sequence ID" value="NZ_JBBIAE010000001.1"/>
</dbReference>
<dbReference type="SMR" id="A6QGW6"/>
<dbReference type="KEGG" id="sae:NWMN_1326"/>
<dbReference type="HOGENOM" id="CLU_004709_1_0_9"/>
<dbReference type="Proteomes" id="UP000006386">
    <property type="component" value="Chromosome"/>
</dbReference>
<dbReference type="GO" id="GO:0005829">
    <property type="term" value="C:cytosol"/>
    <property type="evidence" value="ECO:0007669"/>
    <property type="project" value="TreeGrafter"/>
</dbReference>
<dbReference type="GO" id="GO:0045252">
    <property type="term" value="C:oxoglutarate dehydrogenase complex"/>
    <property type="evidence" value="ECO:0007669"/>
    <property type="project" value="TreeGrafter"/>
</dbReference>
<dbReference type="GO" id="GO:0004591">
    <property type="term" value="F:oxoglutarate dehydrogenase (succinyl-transferring) activity"/>
    <property type="evidence" value="ECO:0007669"/>
    <property type="project" value="UniProtKB-UniRule"/>
</dbReference>
<dbReference type="GO" id="GO:0030976">
    <property type="term" value="F:thiamine pyrophosphate binding"/>
    <property type="evidence" value="ECO:0007669"/>
    <property type="project" value="UniProtKB-UniRule"/>
</dbReference>
<dbReference type="GO" id="GO:0006096">
    <property type="term" value="P:glycolytic process"/>
    <property type="evidence" value="ECO:0007669"/>
    <property type="project" value="UniProtKB-UniRule"/>
</dbReference>
<dbReference type="GO" id="GO:0006099">
    <property type="term" value="P:tricarboxylic acid cycle"/>
    <property type="evidence" value="ECO:0007669"/>
    <property type="project" value="TreeGrafter"/>
</dbReference>
<dbReference type="CDD" id="cd02016">
    <property type="entry name" value="TPP_E1_OGDC_like"/>
    <property type="match status" value="1"/>
</dbReference>
<dbReference type="FunFam" id="3.40.50.11610:FF:000002">
    <property type="entry name" value="2-oxoglutarate dehydrogenase E1 component"/>
    <property type="match status" value="1"/>
</dbReference>
<dbReference type="FunFam" id="3.40.50.970:FF:000036">
    <property type="entry name" value="2-oxoglutarate dehydrogenase E1 component"/>
    <property type="match status" value="1"/>
</dbReference>
<dbReference type="Gene3D" id="3.40.50.12470">
    <property type="match status" value="1"/>
</dbReference>
<dbReference type="Gene3D" id="3.40.50.970">
    <property type="match status" value="1"/>
</dbReference>
<dbReference type="Gene3D" id="3.40.50.11610">
    <property type="entry name" value="Multifunctional 2-oxoglutarate metabolism enzyme, C-terminal domain"/>
    <property type="match status" value="1"/>
</dbReference>
<dbReference type="Gene3D" id="1.10.287.1150">
    <property type="entry name" value="TPP helical domain"/>
    <property type="match status" value="1"/>
</dbReference>
<dbReference type="HAMAP" id="MF_01169">
    <property type="entry name" value="SucA_OdhA"/>
    <property type="match status" value="1"/>
</dbReference>
<dbReference type="InterPro" id="IPR011603">
    <property type="entry name" value="2oxoglutarate_DH_E1"/>
</dbReference>
<dbReference type="InterPro" id="IPR023784">
    <property type="entry name" value="2oxoglutarate_DH_E1_bac"/>
</dbReference>
<dbReference type="InterPro" id="IPR001017">
    <property type="entry name" value="DH_E1"/>
</dbReference>
<dbReference type="InterPro" id="IPR042179">
    <property type="entry name" value="KGD_C_sf"/>
</dbReference>
<dbReference type="InterPro" id="IPR031717">
    <property type="entry name" value="ODO-1/KGD_C"/>
</dbReference>
<dbReference type="InterPro" id="IPR029061">
    <property type="entry name" value="THDP-binding"/>
</dbReference>
<dbReference type="InterPro" id="IPR005475">
    <property type="entry name" value="Transketolase-like_Pyr-bd"/>
</dbReference>
<dbReference type="NCBIfam" id="TIGR00239">
    <property type="entry name" value="2oxo_dh_E1"/>
    <property type="match status" value="1"/>
</dbReference>
<dbReference type="NCBIfam" id="NF006914">
    <property type="entry name" value="PRK09404.1"/>
    <property type="match status" value="1"/>
</dbReference>
<dbReference type="NCBIfam" id="NF008907">
    <property type="entry name" value="PRK12270.1"/>
    <property type="match status" value="1"/>
</dbReference>
<dbReference type="PANTHER" id="PTHR23152:SF4">
    <property type="entry name" value="2-OXOADIPATE DEHYDROGENASE COMPLEX COMPONENT E1"/>
    <property type="match status" value="1"/>
</dbReference>
<dbReference type="PANTHER" id="PTHR23152">
    <property type="entry name" value="2-OXOGLUTARATE DEHYDROGENASE"/>
    <property type="match status" value="1"/>
</dbReference>
<dbReference type="Pfam" id="PF00676">
    <property type="entry name" value="E1_dh"/>
    <property type="match status" value="1"/>
</dbReference>
<dbReference type="Pfam" id="PF16870">
    <property type="entry name" value="OxoGdeHyase_C"/>
    <property type="match status" value="1"/>
</dbReference>
<dbReference type="Pfam" id="PF02779">
    <property type="entry name" value="Transket_pyr"/>
    <property type="match status" value="1"/>
</dbReference>
<dbReference type="PIRSF" id="PIRSF000157">
    <property type="entry name" value="Oxoglu_dh_E1"/>
    <property type="match status" value="1"/>
</dbReference>
<dbReference type="SMART" id="SM00861">
    <property type="entry name" value="Transket_pyr"/>
    <property type="match status" value="1"/>
</dbReference>
<dbReference type="SUPFAM" id="SSF52518">
    <property type="entry name" value="Thiamin diphosphate-binding fold (THDP-binding)"/>
    <property type="match status" value="2"/>
</dbReference>
<name>ODO1_STAAE</name>
<organism>
    <name type="scientific">Staphylococcus aureus (strain Newman)</name>
    <dbReference type="NCBI Taxonomy" id="426430"/>
    <lineage>
        <taxon>Bacteria</taxon>
        <taxon>Bacillati</taxon>
        <taxon>Bacillota</taxon>
        <taxon>Bacilli</taxon>
        <taxon>Bacillales</taxon>
        <taxon>Staphylococcaceae</taxon>
        <taxon>Staphylococcus</taxon>
    </lineage>
</organism>
<comment type="function">
    <text evidence="1">E1 component of the 2-oxoglutarate dehydrogenase (OGDH) complex which catalyzes the decarboxylation of 2-oxoglutarate, the first step in the conversion of 2-oxoglutarate to succinyl-CoA and CO(2).</text>
</comment>
<comment type="catalytic activity">
    <reaction evidence="1">
        <text>N(6)-[(R)-lipoyl]-L-lysyl-[protein] + 2-oxoglutarate + H(+) = N(6)-[(R)-S(8)-succinyldihydrolipoyl]-L-lysyl-[protein] + CO2</text>
        <dbReference type="Rhea" id="RHEA:12188"/>
        <dbReference type="Rhea" id="RHEA-COMP:10474"/>
        <dbReference type="Rhea" id="RHEA-COMP:20092"/>
        <dbReference type="ChEBI" id="CHEBI:15378"/>
        <dbReference type="ChEBI" id="CHEBI:16526"/>
        <dbReference type="ChEBI" id="CHEBI:16810"/>
        <dbReference type="ChEBI" id="CHEBI:83099"/>
        <dbReference type="ChEBI" id="CHEBI:83120"/>
        <dbReference type="EC" id="1.2.4.2"/>
    </reaction>
</comment>
<comment type="cofactor">
    <cofactor evidence="1">
        <name>thiamine diphosphate</name>
        <dbReference type="ChEBI" id="CHEBI:58937"/>
    </cofactor>
</comment>
<comment type="subunit">
    <text evidence="1">Homodimer. Part of the 2-oxoglutarate dehydrogenase (OGDH) complex composed of E1 (2-oxoglutarate dehydrogenase), E2 (dihydrolipoamide succinyltransferase) and E3 (dihydrolipoamide dehydrogenase); the complex contains multiple copies of the three enzymatic components (E1, E2 and E3).</text>
</comment>
<comment type="similarity">
    <text evidence="1">Belongs to the alpha-ketoglutarate dehydrogenase family.</text>
</comment>
<feature type="chain" id="PRO_1000073078" description="2-oxoglutarate dehydrogenase E1 component">
    <location>
        <begin position="1"/>
        <end position="932"/>
    </location>
</feature>
<protein>
    <recommendedName>
        <fullName evidence="1">2-oxoglutarate dehydrogenase E1 component</fullName>
        <ecNumber evidence="1">1.2.4.2</ecNumber>
    </recommendedName>
    <alternativeName>
        <fullName evidence="1">Alpha-ketoglutarate dehydrogenase</fullName>
    </alternativeName>
</protein>
<sequence>MTNERKEVSEAPVNFGANLGLMLDLYDDFLQDPSSVPEDLQVLFSTIKNDDSIVPALKSTSSQNSDGTIKRVMRLIDNIRQYGHLKADIYPVNPPKRKHVPKLEIEDFDLDQQTLEGISAGIVSDHFADIYDNAYEAILRMEKRYKGPIAFEYTHINNNTERGWLKRRIETPYKVTLNNNEKRALFKQLAYVEGFEKYLHKNFVGAKRFSIEGVDALVPMLQRTITIAAKEGIKNIQIGMAHRGRLNVLTHVLEKPYEMMISEFMHTDPMKFLPEDGSLQLTAGWTGDVKYHLGGIKTTDSYGTMQRIALANNPSHLEIVAPVVEGRTRAAQDDTQRAGAPTTDHHKAMPIIIHGDAAYPGQGINFETMNLGNLKGYSTGGSLHIITNNRIGFTTEPIDARSTTYSTDVAKGYDVPIFHVNADDVEATIEAIDIAMEFRKEFHKDVVIDLVGYRRFGHNEMDEPSITNPVPYQNIRKHDSVEYVFGKKLVNEGVISEDEMHSFIEQVQKELRQAHDKINKADKMDNPDMEKPADLALPLQADEQSFTFDHLKEINDALLTYPDGFNILKKLNKVLEKRHEPFNKEDGLVDWAQAEQLAFATILQDGTPIRLTGQDSERGTFSHRHAVLHDEQTGETYTPLHHVPDQKATFDIHNSPLSEAAVVGFEYGYNVENKKSFNIWEAQYGDFANMSQMIFDNFLFSSRSKWGERSGLTLFLPHAYEGQGPEHSSARLERFLQLAAENNCTVVNLSSSSNYFHLLRAQAASLDSEQMRPLVVMSPKSLLRNKTVAKPIDEFTSGGFEPILTESYQADKVTKVILATGKMFIDLKEALAKNPDESVLLVAIERLYPFPEEEIEALLAQLPNLEEVSWVQEEPKNQGAWLYVYPYVKVLVADKYDLSYHGRIQRAAPAEGDGEIHKLVQNKIIENALKNN</sequence>
<proteinExistence type="inferred from homology"/>
<reference key="1">
    <citation type="journal article" date="2008" name="J. Bacteriol.">
        <title>Genome sequence of Staphylococcus aureus strain Newman and comparative analysis of staphylococcal genomes: polymorphism and evolution of two major pathogenicity islands.</title>
        <authorList>
            <person name="Baba T."/>
            <person name="Bae T."/>
            <person name="Schneewind O."/>
            <person name="Takeuchi F."/>
            <person name="Hiramatsu K."/>
        </authorList>
    </citation>
    <scope>NUCLEOTIDE SEQUENCE [LARGE SCALE GENOMIC DNA]</scope>
    <source>
        <strain>Newman</strain>
    </source>
</reference>
<keyword id="KW-0324">Glycolysis</keyword>
<keyword id="KW-0560">Oxidoreductase</keyword>
<keyword id="KW-0786">Thiamine pyrophosphate</keyword>
<gene>
    <name evidence="1" type="primary">odhA</name>
    <name type="ordered locus">NWMN_1326</name>
</gene>